<keyword id="KW-0418">Kinase</keyword>
<keyword id="KW-0547">Nucleotide-binding</keyword>
<keyword id="KW-0723">Serine/threonine-protein kinase</keyword>
<keyword id="KW-0808">Transferase</keyword>
<proteinExistence type="inferred from homology"/>
<evidence type="ECO:0000255" key="1">
    <source>
        <dbReference type="HAMAP-Rule" id="MF_01062"/>
    </source>
</evidence>
<feature type="chain" id="PRO_1000136499" description="Putative phosphoenolpyruvate synthase regulatory protein">
    <location>
        <begin position="1"/>
        <end position="273"/>
    </location>
</feature>
<feature type="binding site" evidence="1">
    <location>
        <begin position="153"/>
        <end position="160"/>
    </location>
    <ligand>
        <name>ADP</name>
        <dbReference type="ChEBI" id="CHEBI:456216"/>
    </ligand>
</feature>
<accession>B4SMR2</accession>
<name>PSRP_STRM5</name>
<gene>
    <name type="ordered locus">Smal_2421</name>
</gene>
<dbReference type="EC" id="2.7.11.33" evidence="1"/>
<dbReference type="EC" id="2.7.4.28" evidence="1"/>
<dbReference type="EMBL" id="CP001111">
    <property type="protein sequence ID" value="ACF52124.1"/>
    <property type="molecule type" value="Genomic_DNA"/>
</dbReference>
<dbReference type="RefSeq" id="WP_012511422.1">
    <property type="nucleotide sequence ID" value="NC_011071.1"/>
</dbReference>
<dbReference type="SMR" id="B4SMR2"/>
<dbReference type="STRING" id="391008.Smal_2421"/>
<dbReference type="KEGG" id="smt:Smal_2421"/>
<dbReference type="eggNOG" id="COG1806">
    <property type="taxonomic scope" value="Bacteria"/>
</dbReference>
<dbReference type="HOGENOM" id="CLU_046206_1_0_6"/>
<dbReference type="OrthoDB" id="9782201at2"/>
<dbReference type="Proteomes" id="UP000001867">
    <property type="component" value="Chromosome"/>
</dbReference>
<dbReference type="GO" id="GO:0043531">
    <property type="term" value="F:ADP binding"/>
    <property type="evidence" value="ECO:0007669"/>
    <property type="project" value="UniProtKB-UniRule"/>
</dbReference>
<dbReference type="GO" id="GO:0005524">
    <property type="term" value="F:ATP binding"/>
    <property type="evidence" value="ECO:0007669"/>
    <property type="project" value="InterPro"/>
</dbReference>
<dbReference type="GO" id="GO:0016776">
    <property type="term" value="F:phosphotransferase activity, phosphate group as acceptor"/>
    <property type="evidence" value="ECO:0007669"/>
    <property type="project" value="UniProtKB-UniRule"/>
</dbReference>
<dbReference type="GO" id="GO:0004674">
    <property type="term" value="F:protein serine/threonine kinase activity"/>
    <property type="evidence" value="ECO:0007669"/>
    <property type="project" value="UniProtKB-UniRule"/>
</dbReference>
<dbReference type="HAMAP" id="MF_01062">
    <property type="entry name" value="PSRP"/>
    <property type="match status" value="1"/>
</dbReference>
<dbReference type="InterPro" id="IPR005177">
    <property type="entry name" value="Kinase-pyrophosphorylase"/>
</dbReference>
<dbReference type="InterPro" id="IPR026530">
    <property type="entry name" value="PSRP"/>
</dbReference>
<dbReference type="NCBIfam" id="NF003742">
    <property type="entry name" value="PRK05339.1"/>
    <property type="match status" value="1"/>
</dbReference>
<dbReference type="PANTHER" id="PTHR31756">
    <property type="entry name" value="PYRUVATE, PHOSPHATE DIKINASE REGULATORY PROTEIN 1, CHLOROPLASTIC"/>
    <property type="match status" value="1"/>
</dbReference>
<dbReference type="PANTHER" id="PTHR31756:SF3">
    <property type="entry name" value="PYRUVATE, PHOSPHATE DIKINASE REGULATORY PROTEIN 1, CHLOROPLASTIC"/>
    <property type="match status" value="1"/>
</dbReference>
<dbReference type="Pfam" id="PF03618">
    <property type="entry name" value="Kinase-PPPase"/>
    <property type="match status" value="1"/>
</dbReference>
<protein>
    <recommendedName>
        <fullName evidence="1">Putative phosphoenolpyruvate synthase regulatory protein</fullName>
        <shortName evidence="1">PEP synthase regulatory protein</shortName>
        <shortName evidence="1">PSRP</shortName>
        <ecNumber evidence="1">2.7.11.33</ecNumber>
        <ecNumber evidence="1">2.7.4.28</ecNumber>
    </recommendedName>
    <alternativeName>
        <fullName evidence="1">Pyruvate, water dikinase regulatory protein</fullName>
    </alternativeName>
</protein>
<comment type="function">
    <text evidence="1">Bifunctional serine/threonine kinase and phosphorylase involved in the regulation of the phosphoenolpyruvate synthase (PEPS) by catalyzing its phosphorylation/dephosphorylation.</text>
</comment>
<comment type="catalytic activity">
    <reaction evidence="1">
        <text>[pyruvate, water dikinase] + ADP = [pyruvate, water dikinase]-phosphate + AMP + H(+)</text>
        <dbReference type="Rhea" id="RHEA:46020"/>
        <dbReference type="Rhea" id="RHEA-COMP:11425"/>
        <dbReference type="Rhea" id="RHEA-COMP:11426"/>
        <dbReference type="ChEBI" id="CHEBI:15378"/>
        <dbReference type="ChEBI" id="CHEBI:43176"/>
        <dbReference type="ChEBI" id="CHEBI:68546"/>
        <dbReference type="ChEBI" id="CHEBI:456215"/>
        <dbReference type="ChEBI" id="CHEBI:456216"/>
        <dbReference type="EC" id="2.7.11.33"/>
    </reaction>
</comment>
<comment type="catalytic activity">
    <reaction evidence="1">
        <text>[pyruvate, water dikinase]-phosphate + phosphate + H(+) = [pyruvate, water dikinase] + diphosphate</text>
        <dbReference type="Rhea" id="RHEA:48580"/>
        <dbReference type="Rhea" id="RHEA-COMP:11425"/>
        <dbReference type="Rhea" id="RHEA-COMP:11426"/>
        <dbReference type="ChEBI" id="CHEBI:15378"/>
        <dbReference type="ChEBI" id="CHEBI:33019"/>
        <dbReference type="ChEBI" id="CHEBI:43176"/>
        <dbReference type="ChEBI" id="CHEBI:43474"/>
        <dbReference type="ChEBI" id="CHEBI:68546"/>
        <dbReference type="EC" id="2.7.4.28"/>
    </reaction>
</comment>
<comment type="similarity">
    <text evidence="1">Belongs to the pyruvate, phosphate/water dikinase regulatory protein family. PSRP subfamily.</text>
</comment>
<organism>
    <name type="scientific">Stenotrophomonas maltophilia (strain R551-3)</name>
    <dbReference type="NCBI Taxonomy" id="391008"/>
    <lineage>
        <taxon>Bacteria</taxon>
        <taxon>Pseudomonadati</taxon>
        <taxon>Pseudomonadota</taxon>
        <taxon>Gammaproteobacteria</taxon>
        <taxon>Lysobacterales</taxon>
        <taxon>Lysobacteraceae</taxon>
        <taxon>Stenotrophomonas</taxon>
        <taxon>Stenotrophomonas maltophilia group</taxon>
    </lineage>
</organism>
<reference key="1">
    <citation type="submission" date="2008-06" db="EMBL/GenBank/DDBJ databases">
        <title>Complete sequence of Stenotrophomonas maltophilia R551-3.</title>
        <authorList>
            <consortium name="US DOE Joint Genome Institute"/>
            <person name="Lucas S."/>
            <person name="Copeland A."/>
            <person name="Lapidus A."/>
            <person name="Glavina del Rio T."/>
            <person name="Dalin E."/>
            <person name="Tice H."/>
            <person name="Pitluck S."/>
            <person name="Chain P."/>
            <person name="Malfatti S."/>
            <person name="Shin M."/>
            <person name="Vergez L."/>
            <person name="Lang D."/>
            <person name="Schmutz J."/>
            <person name="Larimer F."/>
            <person name="Land M."/>
            <person name="Hauser L."/>
            <person name="Kyrpides N."/>
            <person name="Mikhailova N."/>
            <person name="Taghavi S."/>
            <person name="Monchy S."/>
            <person name="Newman L."/>
            <person name="Vangronsveld J."/>
            <person name="van der Lelie D."/>
            <person name="Richardson P."/>
        </authorList>
    </citation>
    <scope>NUCLEOTIDE SEQUENCE [LARGE SCALE GENOMIC DNA]</scope>
    <source>
        <strain>R551-3</strain>
    </source>
</reference>
<sequence length="273" mass="30754">MSTIRPVFYVSDGTGITAETIGHSLLTQFSGFSFITDRMSFVDDPEKAREACSRIQAAGERYQVRPIVVNSCVDQSLSLILAESGALMLDVFAPFIEPLERELSSSRVNRVGQAHGMVDFDTYHRRINAMNFALTHDDGIAVNYDDADVILVAVSRAGKTPTCIYLALHYGVRAANYPLTDEDLESDRLPPRLRNYRRKLFGLTIDPDRLQQIRQERRPNSRYANLDTCKREVAAAEVMFQMERIPTLSTTHTSIEEISSKVLATLGLQRELY</sequence>